<name>PHM_CAEEL</name>
<feature type="signal peptide" evidence="3">
    <location>
        <begin position="1"/>
        <end position="22"/>
    </location>
</feature>
<feature type="chain" id="PRO_0000248570" description="Probable peptidylglycine alpha-hydroxylating monooxygenase 1" evidence="6">
    <location>
        <begin position="23"/>
        <end position="324"/>
    </location>
</feature>
<feature type="binding site" evidence="1">
    <location>
        <position position="66"/>
    </location>
    <ligand>
        <name>Cu cation</name>
        <dbReference type="ChEBI" id="CHEBI:23378"/>
        <label>A</label>
    </ligand>
</feature>
<feature type="binding site" evidence="1">
    <location>
        <position position="67"/>
    </location>
    <ligand>
        <name>Cu cation</name>
        <dbReference type="ChEBI" id="CHEBI:23378"/>
        <label>A</label>
    </ligand>
</feature>
<feature type="binding site" evidence="1">
    <location>
        <position position="142"/>
    </location>
    <ligand>
        <name>Cu cation</name>
        <dbReference type="ChEBI" id="CHEBI:23378"/>
        <label>A</label>
    </ligand>
</feature>
<feature type="binding site" evidence="1">
    <location>
        <position position="207"/>
    </location>
    <ligand>
        <name>Cu cation</name>
        <dbReference type="ChEBI" id="CHEBI:23378"/>
        <label>B</label>
    </ligand>
</feature>
<feature type="binding site" evidence="1">
    <location>
        <position position="209"/>
    </location>
    <ligand>
        <name>Cu cation</name>
        <dbReference type="ChEBI" id="CHEBI:23378"/>
        <label>B</label>
    </ligand>
</feature>
<feature type="binding site" evidence="1">
    <location>
        <position position="284"/>
    </location>
    <ligand>
        <name>Cu cation</name>
        <dbReference type="ChEBI" id="CHEBI:23378"/>
        <label>B</label>
    </ligand>
</feature>
<feature type="glycosylation site" description="N-linked (GlcNAc...) asparagine" evidence="4 5">
    <location>
        <position position="182"/>
    </location>
</feature>
<feature type="disulfide bond" evidence="1">
    <location>
        <begin position="41"/>
        <end position="85"/>
    </location>
</feature>
<feature type="disulfide bond" evidence="1">
    <location>
        <begin position="73"/>
        <end position="101"/>
    </location>
</feature>
<feature type="disulfide bond" evidence="1">
    <location>
        <begin position="264"/>
        <end position="285"/>
    </location>
</feature>
<protein>
    <recommendedName>
        <fullName evidence="7">Probable peptidylglycine alpha-hydroxylating monooxygenase 1</fullName>
        <shortName evidence="6">PHM</shortName>
        <ecNumber evidence="2">1.14.17.3</ecNumber>
    </recommendedName>
</protein>
<comment type="function">
    <text evidence="2">Monooxygenase that catalyzes an essential reaction in C-terminal alpha-amidation of peptides. Produces an unstable peptidyl(2-hydroxyglycine) intermediate. C-terminal amidation of peptides such as neuropeptides is essential for full biological activity.</text>
</comment>
<comment type="catalytic activity">
    <reaction evidence="2">
        <text>a [peptide]-C-terminal glycine + 2 L-ascorbate + O2 = a [peptide]-C-terminal (2S)-2-hydroxyglycine + 2 monodehydro-L-ascorbate radical + H2O</text>
        <dbReference type="Rhea" id="RHEA:21452"/>
        <dbReference type="Rhea" id="RHEA-COMP:13486"/>
        <dbReference type="Rhea" id="RHEA-COMP:15321"/>
        <dbReference type="ChEBI" id="CHEBI:15377"/>
        <dbReference type="ChEBI" id="CHEBI:15379"/>
        <dbReference type="ChEBI" id="CHEBI:38290"/>
        <dbReference type="ChEBI" id="CHEBI:59513"/>
        <dbReference type="ChEBI" id="CHEBI:137000"/>
        <dbReference type="ChEBI" id="CHEBI:142768"/>
        <dbReference type="EC" id="1.14.17.3"/>
    </reaction>
</comment>
<comment type="cofactor">
    <cofactor evidence="2">
        <name>Cu(2+)</name>
        <dbReference type="ChEBI" id="CHEBI:29036"/>
    </cofactor>
    <text evidence="2">Binds 2 copper ions per subunit.</text>
</comment>
<comment type="subcellular location">
    <subcellularLocation>
        <location evidence="6">Secreted</location>
    </subcellularLocation>
</comment>
<comment type="similarity">
    <text evidence="6">Belongs to the copper type II ascorbate-dependent monooxygenase family.</text>
</comment>
<gene>
    <name evidence="7" type="primary">pghm-1</name>
    <name evidence="7" type="ORF">Y71G12B.4</name>
</gene>
<evidence type="ECO:0000250" key="1"/>
<evidence type="ECO:0000250" key="2">
    <source>
        <dbReference type="UniProtKB" id="O01404"/>
    </source>
</evidence>
<evidence type="ECO:0000255" key="3"/>
<evidence type="ECO:0000269" key="4">
    <source>
    </source>
</evidence>
<evidence type="ECO:0000269" key="5">
    <source>
    </source>
</evidence>
<evidence type="ECO:0000305" key="6"/>
<evidence type="ECO:0000312" key="7">
    <source>
        <dbReference type="WormBase" id="Y71G12B.4"/>
    </source>
</evidence>
<accession>Q95XM2</accession>
<dbReference type="EC" id="1.14.17.3" evidence="2"/>
<dbReference type="EMBL" id="FO080942">
    <property type="protein sequence ID" value="CCD67961.1"/>
    <property type="molecule type" value="Genomic_DNA"/>
</dbReference>
<dbReference type="RefSeq" id="NP_490898.1">
    <property type="nucleotide sequence ID" value="NM_058497.8"/>
</dbReference>
<dbReference type="SMR" id="Q95XM2"/>
<dbReference type="FunCoup" id="Q95XM2">
    <property type="interactions" value="497"/>
</dbReference>
<dbReference type="STRING" id="6239.Y71G12B.4.1"/>
<dbReference type="GlyCosmos" id="Q95XM2">
    <property type="glycosylation" value="1 site, No reported glycans"/>
</dbReference>
<dbReference type="iPTMnet" id="Q95XM2"/>
<dbReference type="PaxDb" id="6239-Y71G12B.4"/>
<dbReference type="PeptideAtlas" id="Q95XM2"/>
<dbReference type="EnsemblMetazoa" id="Y71G12B.4.1">
    <property type="protein sequence ID" value="Y71G12B.4.1"/>
    <property type="gene ID" value="WBGene00022144"/>
</dbReference>
<dbReference type="GeneID" id="171746"/>
<dbReference type="KEGG" id="cel:CELE_Y71G12B.4"/>
<dbReference type="UCSC" id="Y71G12B.4">
    <property type="organism name" value="c. elegans"/>
</dbReference>
<dbReference type="AGR" id="WB:WBGene00022144"/>
<dbReference type="CTD" id="171746"/>
<dbReference type="WormBase" id="Y71G12B.4">
    <property type="protein sequence ID" value="CE26253"/>
    <property type="gene ID" value="WBGene00022144"/>
    <property type="gene designation" value="pghm-1"/>
</dbReference>
<dbReference type="eggNOG" id="KOG3567">
    <property type="taxonomic scope" value="Eukaryota"/>
</dbReference>
<dbReference type="GeneTree" id="ENSGT00940000173843"/>
<dbReference type="HOGENOM" id="CLU_051564_0_0_1"/>
<dbReference type="InParanoid" id="Q95XM2"/>
<dbReference type="OMA" id="PELYLCT"/>
<dbReference type="OrthoDB" id="10044505at2759"/>
<dbReference type="PhylomeDB" id="Q95XM2"/>
<dbReference type="PRO" id="PR:Q95XM2"/>
<dbReference type="Proteomes" id="UP000001940">
    <property type="component" value="Chromosome I"/>
</dbReference>
<dbReference type="Bgee" id="WBGene00022144">
    <property type="expression patterns" value="Expressed in larva and 3 other cell types or tissues"/>
</dbReference>
<dbReference type="GO" id="GO:0005576">
    <property type="term" value="C:extracellular region"/>
    <property type="evidence" value="ECO:0007669"/>
    <property type="project" value="UniProtKB-SubCell"/>
</dbReference>
<dbReference type="GO" id="GO:0016020">
    <property type="term" value="C:membrane"/>
    <property type="evidence" value="ECO:0007669"/>
    <property type="project" value="InterPro"/>
</dbReference>
<dbReference type="GO" id="GO:0005507">
    <property type="term" value="F:copper ion binding"/>
    <property type="evidence" value="ECO:0007669"/>
    <property type="project" value="InterPro"/>
</dbReference>
<dbReference type="GO" id="GO:0004504">
    <property type="term" value="F:peptidylglycine monooxygenase activity"/>
    <property type="evidence" value="ECO:0007669"/>
    <property type="project" value="UniProtKB-EC"/>
</dbReference>
<dbReference type="GO" id="GO:0006518">
    <property type="term" value="P:peptide metabolic process"/>
    <property type="evidence" value="ECO:0007669"/>
    <property type="project" value="InterPro"/>
</dbReference>
<dbReference type="FunFam" id="2.60.120.310:FF:000005">
    <property type="entry name" value="Peptidylglycine alpha-hydroxylating monooxygenase"/>
    <property type="match status" value="1"/>
</dbReference>
<dbReference type="Gene3D" id="2.60.120.230">
    <property type="match status" value="1"/>
</dbReference>
<dbReference type="Gene3D" id="2.60.120.310">
    <property type="entry name" value="Copper type II, ascorbate-dependent monooxygenase, N-terminal domain"/>
    <property type="match status" value="1"/>
</dbReference>
<dbReference type="InterPro" id="IPR014784">
    <property type="entry name" value="Cu2_ascorb_mOase-like_C"/>
</dbReference>
<dbReference type="InterPro" id="IPR014783">
    <property type="entry name" value="Cu2_ascorb_mOase_CS-2"/>
</dbReference>
<dbReference type="InterPro" id="IPR000323">
    <property type="entry name" value="Cu2_ascorb_mOase_N"/>
</dbReference>
<dbReference type="InterPro" id="IPR036939">
    <property type="entry name" value="Cu2_ascorb_mOase_N_sf"/>
</dbReference>
<dbReference type="InterPro" id="IPR024548">
    <property type="entry name" value="Cu2_monoox_C"/>
</dbReference>
<dbReference type="InterPro" id="IPR000720">
    <property type="entry name" value="PHM/PAL"/>
</dbReference>
<dbReference type="InterPro" id="IPR008977">
    <property type="entry name" value="PHM/PNGase_F_dom_sf"/>
</dbReference>
<dbReference type="PANTHER" id="PTHR10680">
    <property type="entry name" value="PEPTIDYL-GLYCINE ALPHA-AMIDATING MONOOXYGENASE"/>
    <property type="match status" value="1"/>
</dbReference>
<dbReference type="PANTHER" id="PTHR10680:SF14">
    <property type="entry name" value="PEPTIDYL-GLYCINE ALPHA-AMIDATING MONOOXYGENASE"/>
    <property type="match status" value="1"/>
</dbReference>
<dbReference type="Pfam" id="PF03712">
    <property type="entry name" value="Cu2_monoox_C"/>
    <property type="match status" value="1"/>
</dbReference>
<dbReference type="Pfam" id="PF01082">
    <property type="entry name" value="Cu2_monooxygen"/>
    <property type="match status" value="1"/>
</dbReference>
<dbReference type="PRINTS" id="PR00790">
    <property type="entry name" value="PAMONOXGNASE"/>
</dbReference>
<dbReference type="SUPFAM" id="SSF49742">
    <property type="entry name" value="PHM/PNGase F"/>
    <property type="match status" value="2"/>
</dbReference>
<dbReference type="PROSITE" id="PS00085">
    <property type="entry name" value="CU2_MONOOXYGENASE_2"/>
    <property type="match status" value="1"/>
</dbReference>
<keyword id="KW-0186">Copper</keyword>
<keyword id="KW-1015">Disulfide bond</keyword>
<keyword id="KW-0325">Glycoprotein</keyword>
<keyword id="KW-0479">Metal-binding</keyword>
<keyword id="KW-0503">Monooxygenase</keyword>
<keyword id="KW-0560">Oxidoreductase</keyword>
<keyword id="KW-1185">Reference proteome</keyword>
<keyword id="KW-0964">Secreted</keyword>
<keyword id="KW-0732">Signal</keyword>
<reference key="1">
    <citation type="journal article" date="1998" name="Science">
        <title>Genome sequence of the nematode C. elegans: a platform for investigating biology.</title>
        <authorList>
            <consortium name="The C. elegans sequencing consortium"/>
        </authorList>
    </citation>
    <scope>NUCLEOTIDE SEQUENCE [LARGE SCALE GENOMIC DNA]</scope>
    <source>
        <strain>Bristol N2</strain>
    </source>
</reference>
<reference key="2">
    <citation type="journal article" date="2003" name="Nat. Biotechnol.">
        <title>Lectin affinity capture, isotope-coded tagging and mass spectrometry to identify N-linked glycoproteins.</title>
        <authorList>
            <person name="Kaji H."/>
            <person name="Saito H."/>
            <person name="Yamauchi Y."/>
            <person name="Shinkawa T."/>
            <person name="Taoka M."/>
            <person name="Hirabayashi J."/>
            <person name="Kasai K."/>
            <person name="Takahashi N."/>
            <person name="Isobe T."/>
        </authorList>
    </citation>
    <scope>GLYCOSYLATION [LARGE SCALE ANALYSIS] AT ASN-182</scope>
    <scope>IDENTIFICATION BY MASS SPECTROMETRY</scope>
    <source>
        <strain>Bristol N2</strain>
    </source>
</reference>
<reference key="3">
    <citation type="journal article" date="2007" name="Mol. Cell. Proteomics">
        <title>Proteomics reveals N-linked glycoprotein diversity in Caenorhabditis elegans and suggests an atypical translocation mechanism for integral membrane proteins.</title>
        <authorList>
            <person name="Kaji H."/>
            <person name="Kamiie J."/>
            <person name="Kawakami H."/>
            <person name="Kido K."/>
            <person name="Yamauchi Y."/>
            <person name="Shinkawa T."/>
            <person name="Taoka M."/>
            <person name="Takahashi N."/>
            <person name="Isobe T."/>
        </authorList>
    </citation>
    <scope>GLYCOSYLATION [LARGE SCALE ANALYSIS] AT ASN-182</scope>
    <scope>IDENTIFICATION BY MASS SPECTROMETRY</scope>
    <source>
        <strain>Bristol N2</strain>
    </source>
</reference>
<proteinExistence type="evidence at protein level"/>
<sequence>MPRFYLLSSCALLAFATSFCNAEKSQIRMPGVVPEADSYLCTSLELSDQENYLTGFKALTTKGTAHHILLFGCEEPGSDELVWDCGEMNKPDDEMPRAPTCGSKPAILYAWALDAPPLELPQDVGFRVGGDSNIRHLVMQVHYMHSKQEPDETGLEITHTEEPQPKLAATMLLVTGGTLPRNKTESFETACMIEEDVVMHPFAYRTHTHRHGKEVSGWLVKEDQKHEDHWKLIGRRDPQLAQMFVPVEDQAMTIQQGDMVTARCILQNNENRDISMGATEEDEMCNFYIMYWTDGEVMQDNTCYSPGAPDYKWAREADLNHIPK</sequence>
<organism>
    <name type="scientific">Caenorhabditis elegans</name>
    <dbReference type="NCBI Taxonomy" id="6239"/>
    <lineage>
        <taxon>Eukaryota</taxon>
        <taxon>Metazoa</taxon>
        <taxon>Ecdysozoa</taxon>
        <taxon>Nematoda</taxon>
        <taxon>Chromadorea</taxon>
        <taxon>Rhabditida</taxon>
        <taxon>Rhabditina</taxon>
        <taxon>Rhabditomorpha</taxon>
        <taxon>Rhabditoidea</taxon>
        <taxon>Rhabditidae</taxon>
        <taxon>Peloderinae</taxon>
        <taxon>Caenorhabditis</taxon>
    </lineage>
</organism>